<evidence type="ECO:0000250" key="1"/>
<evidence type="ECO:0000250" key="2">
    <source>
        <dbReference type="UniProtKB" id="Q15813"/>
    </source>
</evidence>
<evidence type="ECO:0000255" key="3">
    <source>
        <dbReference type="PROSITE-ProRule" id="PRU00045"/>
    </source>
</evidence>
<evidence type="ECO:0000269" key="4">
    <source>
    </source>
</evidence>
<evidence type="ECO:0000269" key="5">
    <source>
    </source>
</evidence>
<evidence type="ECO:0000305" key="6"/>
<evidence type="ECO:0007829" key="7">
    <source>
        <dbReference type="PDB" id="1WJN"/>
    </source>
</evidence>
<comment type="function">
    <text evidence="2 4 5">Tubulin-folding protein; involved in the second step of the tubulin folding pathway and in the regulation of tubulin heterodimer dissociation (PubMed:12389029, PubMed:17184771). Required for correct organization of microtubule cytoskeleton and mitotic splindle, and maintenance of the neuronal microtubule network (By similarity).</text>
</comment>
<comment type="subunit">
    <text evidence="2 5">Supercomplex made of cofactors A to E. Cofactors A and D function by capturing and stabilizing tubulin in a quasi-native conformation. Cofactor E binds to the cofactor D-tubulin complex; interaction with cofactor C then causes the release of tubulin polypeptides that are committed to the native state. Cofactors B and E can form a heterodimer which binds to alpha-tubulin and enhances their ability to dissociate tubulin heterodimers. Interacts with TBCD (By similarity).</text>
</comment>
<comment type="subcellular location">
    <subcellularLocation>
        <location evidence="1">Cytoplasm</location>
    </subcellularLocation>
    <subcellularLocation>
        <location evidence="1">Cytoplasm</location>
        <location evidence="1">Cytoskeleton</location>
    </subcellularLocation>
</comment>
<comment type="tissue specificity">
    <text evidence="4">Ubiquitously expressed.</text>
</comment>
<comment type="similarity">
    <text evidence="6">Belongs to the TBCE family.</text>
</comment>
<protein>
    <recommendedName>
        <fullName>Tubulin-specific chaperone E</fullName>
    </recommendedName>
    <alternativeName>
        <fullName>Tubulin-folding cofactor E</fullName>
    </alternativeName>
</protein>
<proteinExistence type="evidence at protein level"/>
<name>TBCE_MOUSE</name>
<organism>
    <name type="scientific">Mus musculus</name>
    <name type="common">Mouse</name>
    <dbReference type="NCBI Taxonomy" id="10090"/>
    <lineage>
        <taxon>Eukaryota</taxon>
        <taxon>Metazoa</taxon>
        <taxon>Chordata</taxon>
        <taxon>Craniata</taxon>
        <taxon>Vertebrata</taxon>
        <taxon>Euteleostomi</taxon>
        <taxon>Mammalia</taxon>
        <taxon>Eutheria</taxon>
        <taxon>Euarchontoglires</taxon>
        <taxon>Glires</taxon>
        <taxon>Rodentia</taxon>
        <taxon>Myomorpha</taxon>
        <taxon>Muroidea</taxon>
        <taxon>Muridae</taxon>
        <taxon>Murinae</taxon>
        <taxon>Mus</taxon>
        <taxon>Mus</taxon>
    </lineage>
</organism>
<reference key="1">
    <citation type="journal article" date="2002" name="Nat. Genet.">
        <title>A missense mutation in Tbce causes progressive motor neuronopathy in mice.</title>
        <authorList>
            <person name="Martin N."/>
            <person name="Jaubert J."/>
            <person name="Gounon P."/>
            <person name="Salido E."/>
            <person name="Haase G."/>
            <person name="Szatanik M."/>
            <person name="Guenet J.-L."/>
        </authorList>
    </citation>
    <scope>NUCLEOTIDE SEQUENCE [MRNA]</scope>
    <scope>FUNCTION</scope>
    <scope>TISSUE SPECIFICITY</scope>
    <scope>VARIANTS VAL-348 AND GLY-524</scope>
    <source>
        <strain>129S2/SvPas</strain>
    </source>
</reference>
<reference key="2">
    <citation type="journal article" date="2005" name="Science">
        <title>The transcriptional landscape of the mammalian genome.</title>
        <authorList>
            <person name="Carninci P."/>
            <person name="Kasukawa T."/>
            <person name="Katayama S."/>
            <person name="Gough J."/>
            <person name="Frith M.C."/>
            <person name="Maeda N."/>
            <person name="Oyama R."/>
            <person name="Ravasi T."/>
            <person name="Lenhard B."/>
            <person name="Wells C."/>
            <person name="Kodzius R."/>
            <person name="Shimokawa K."/>
            <person name="Bajic V.B."/>
            <person name="Brenner S.E."/>
            <person name="Batalov S."/>
            <person name="Forrest A.R."/>
            <person name="Zavolan M."/>
            <person name="Davis M.J."/>
            <person name="Wilming L.G."/>
            <person name="Aidinis V."/>
            <person name="Allen J.E."/>
            <person name="Ambesi-Impiombato A."/>
            <person name="Apweiler R."/>
            <person name="Aturaliya R.N."/>
            <person name="Bailey T.L."/>
            <person name="Bansal M."/>
            <person name="Baxter L."/>
            <person name="Beisel K.W."/>
            <person name="Bersano T."/>
            <person name="Bono H."/>
            <person name="Chalk A.M."/>
            <person name="Chiu K.P."/>
            <person name="Choudhary V."/>
            <person name="Christoffels A."/>
            <person name="Clutterbuck D.R."/>
            <person name="Crowe M.L."/>
            <person name="Dalla E."/>
            <person name="Dalrymple B.P."/>
            <person name="de Bono B."/>
            <person name="Della Gatta G."/>
            <person name="di Bernardo D."/>
            <person name="Down T."/>
            <person name="Engstrom P."/>
            <person name="Fagiolini M."/>
            <person name="Faulkner G."/>
            <person name="Fletcher C.F."/>
            <person name="Fukushima T."/>
            <person name="Furuno M."/>
            <person name="Futaki S."/>
            <person name="Gariboldi M."/>
            <person name="Georgii-Hemming P."/>
            <person name="Gingeras T.R."/>
            <person name="Gojobori T."/>
            <person name="Green R.E."/>
            <person name="Gustincich S."/>
            <person name="Harbers M."/>
            <person name="Hayashi Y."/>
            <person name="Hensch T.K."/>
            <person name="Hirokawa N."/>
            <person name="Hill D."/>
            <person name="Huminiecki L."/>
            <person name="Iacono M."/>
            <person name="Ikeo K."/>
            <person name="Iwama A."/>
            <person name="Ishikawa T."/>
            <person name="Jakt M."/>
            <person name="Kanapin A."/>
            <person name="Katoh M."/>
            <person name="Kawasawa Y."/>
            <person name="Kelso J."/>
            <person name="Kitamura H."/>
            <person name="Kitano H."/>
            <person name="Kollias G."/>
            <person name="Krishnan S.P."/>
            <person name="Kruger A."/>
            <person name="Kummerfeld S.K."/>
            <person name="Kurochkin I.V."/>
            <person name="Lareau L.F."/>
            <person name="Lazarevic D."/>
            <person name="Lipovich L."/>
            <person name="Liu J."/>
            <person name="Liuni S."/>
            <person name="McWilliam S."/>
            <person name="Madan Babu M."/>
            <person name="Madera M."/>
            <person name="Marchionni L."/>
            <person name="Matsuda H."/>
            <person name="Matsuzawa S."/>
            <person name="Miki H."/>
            <person name="Mignone F."/>
            <person name="Miyake S."/>
            <person name="Morris K."/>
            <person name="Mottagui-Tabar S."/>
            <person name="Mulder N."/>
            <person name="Nakano N."/>
            <person name="Nakauchi H."/>
            <person name="Ng P."/>
            <person name="Nilsson R."/>
            <person name="Nishiguchi S."/>
            <person name="Nishikawa S."/>
            <person name="Nori F."/>
            <person name="Ohara O."/>
            <person name="Okazaki Y."/>
            <person name="Orlando V."/>
            <person name="Pang K.C."/>
            <person name="Pavan W.J."/>
            <person name="Pavesi G."/>
            <person name="Pesole G."/>
            <person name="Petrovsky N."/>
            <person name="Piazza S."/>
            <person name="Reed J."/>
            <person name="Reid J.F."/>
            <person name="Ring B.Z."/>
            <person name="Ringwald M."/>
            <person name="Rost B."/>
            <person name="Ruan Y."/>
            <person name="Salzberg S.L."/>
            <person name="Sandelin A."/>
            <person name="Schneider C."/>
            <person name="Schoenbach C."/>
            <person name="Sekiguchi K."/>
            <person name="Semple C.A."/>
            <person name="Seno S."/>
            <person name="Sessa L."/>
            <person name="Sheng Y."/>
            <person name="Shibata Y."/>
            <person name="Shimada H."/>
            <person name="Shimada K."/>
            <person name="Silva D."/>
            <person name="Sinclair B."/>
            <person name="Sperling S."/>
            <person name="Stupka E."/>
            <person name="Sugiura K."/>
            <person name="Sultana R."/>
            <person name="Takenaka Y."/>
            <person name="Taki K."/>
            <person name="Tammoja K."/>
            <person name="Tan S.L."/>
            <person name="Tang S."/>
            <person name="Taylor M.S."/>
            <person name="Tegner J."/>
            <person name="Teichmann S.A."/>
            <person name="Ueda H.R."/>
            <person name="van Nimwegen E."/>
            <person name="Verardo R."/>
            <person name="Wei C.L."/>
            <person name="Yagi K."/>
            <person name="Yamanishi H."/>
            <person name="Zabarovsky E."/>
            <person name="Zhu S."/>
            <person name="Zimmer A."/>
            <person name="Hide W."/>
            <person name="Bult C."/>
            <person name="Grimmond S.M."/>
            <person name="Teasdale R.D."/>
            <person name="Liu E.T."/>
            <person name="Brusic V."/>
            <person name="Quackenbush J."/>
            <person name="Wahlestedt C."/>
            <person name="Mattick J.S."/>
            <person name="Hume D.A."/>
            <person name="Kai C."/>
            <person name="Sasaki D."/>
            <person name="Tomaru Y."/>
            <person name="Fukuda S."/>
            <person name="Kanamori-Katayama M."/>
            <person name="Suzuki M."/>
            <person name="Aoki J."/>
            <person name="Arakawa T."/>
            <person name="Iida J."/>
            <person name="Imamura K."/>
            <person name="Itoh M."/>
            <person name="Kato T."/>
            <person name="Kawaji H."/>
            <person name="Kawagashira N."/>
            <person name="Kawashima T."/>
            <person name="Kojima M."/>
            <person name="Kondo S."/>
            <person name="Konno H."/>
            <person name="Nakano K."/>
            <person name="Ninomiya N."/>
            <person name="Nishio T."/>
            <person name="Okada M."/>
            <person name="Plessy C."/>
            <person name="Shibata K."/>
            <person name="Shiraki T."/>
            <person name="Suzuki S."/>
            <person name="Tagami M."/>
            <person name="Waki K."/>
            <person name="Watahiki A."/>
            <person name="Okamura-Oho Y."/>
            <person name="Suzuki H."/>
            <person name="Kawai J."/>
            <person name="Hayashizaki Y."/>
        </authorList>
    </citation>
    <scope>NUCLEOTIDE SEQUENCE [LARGE SCALE MRNA]</scope>
    <source>
        <strain>C57BL/6J</strain>
        <tissue>Liver</tissue>
    </source>
</reference>
<reference key="3">
    <citation type="journal article" date="2004" name="Genome Res.">
        <title>The status, quality, and expansion of the NIH full-length cDNA project: the Mammalian Gene Collection (MGC).</title>
        <authorList>
            <consortium name="The MGC Project Team"/>
        </authorList>
    </citation>
    <scope>NUCLEOTIDE SEQUENCE [LARGE SCALE MRNA]</scope>
    <source>
        <strain>129/Sv X 129/SvCp</strain>
        <tissue>Embryonic stem cell</tissue>
    </source>
</reference>
<reference key="4">
    <citation type="journal article" date="2007" name="Exp. Cell Res.">
        <title>Role of cofactors B (TBCB) and E (TBCE) in tubulin heterodimer dissociation.</title>
        <authorList>
            <person name="Kortazar D."/>
            <person name="Fanarraga M.L."/>
            <person name="Carranza G."/>
            <person name="Bellido J."/>
            <person name="Villegas J.C."/>
            <person name="Avila J."/>
            <person name="Zabala J.C."/>
        </authorList>
    </citation>
    <scope>FUNCTION</scope>
    <scope>INTERACTION WITH TBCB</scope>
</reference>
<reference key="5">
    <citation type="journal article" date="2010" name="Cell">
        <title>A tissue-specific atlas of mouse protein phosphorylation and expression.</title>
        <authorList>
            <person name="Huttlin E.L."/>
            <person name="Jedrychowski M.P."/>
            <person name="Elias J.E."/>
            <person name="Goswami T."/>
            <person name="Rad R."/>
            <person name="Beausoleil S.A."/>
            <person name="Villen J."/>
            <person name="Haas W."/>
            <person name="Sowa M.E."/>
            <person name="Gygi S.P."/>
        </authorList>
    </citation>
    <scope>IDENTIFICATION BY MASS SPECTROMETRY [LARGE SCALE ANALYSIS]</scope>
    <source>
        <tissue>Brain</tissue>
        <tissue>Brown adipose tissue</tissue>
        <tissue>Lung</tissue>
        <tissue>Spleen</tissue>
        <tissue>Testis</tissue>
    </source>
</reference>
<reference key="6">
    <citation type="submission" date="2004-11" db="EMBL/GenBank/DDBJ databases">
        <title>Solution structure of the C-terminal ubiquitin-like domain.</title>
        <authorList>
            <consortium name="RIKEN structural genomics initiative (RSGI)"/>
        </authorList>
    </citation>
    <scope>STRUCTURE BY NMR OF 441-524</scope>
</reference>
<keyword id="KW-0002">3D-structure</keyword>
<keyword id="KW-0007">Acetylation</keyword>
<keyword id="KW-0143">Chaperone</keyword>
<keyword id="KW-0963">Cytoplasm</keyword>
<keyword id="KW-0206">Cytoskeleton</keyword>
<keyword id="KW-0433">Leucine-rich repeat</keyword>
<keyword id="KW-0597">Phosphoprotein</keyword>
<keyword id="KW-1185">Reference proteome</keyword>
<keyword id="KW-0677">Repeat</keyword>
<gene>
    <name type="primary">Tbce</name>
</gene>
<dbReference type="EMBL" id="AY082332">
    <property type="protein sequence ID" value="AAL92570.1"/>
    <property type="molecule type" value="mRNA"/>
</dbReference>
<dbReference type="EMBL" id="AK167383">
    <property type="protein sequence ID" value="BAE39475.1"/>
    <property type="molecule type" value="mRNA"/>
</dbReference>
<dbReference type="EMBL" id="BC050206">
    <property type="protein sequence ID" value="AAH50206.1"/>
    <property type="molecule type" value="mRNA"/>
</dbReference>
<dbReference type="CCDS" id="CCDS26247.1"/>
<dbReference type="RefSeq" id="NP_848027.1">
    <property type="nucleotide sequence ID" value="NM_178337.3"/>
</dbReference>
<dbReference type="PDB" id="1WJN">
    <property type="method" value="NMR"/>
    <property type="chains" value="A=441-524"/>
</dbReference>
<dbReference type="PDBsum" id="1WJN"/>
<dbReference type="BMRB" id="Q8CIV8"/>
<dbReference type="SMR" id="Q8CIV8"/>
<dbReference type="BioGRID" id="214045">
    <property type="interactions" value="6"/>
</dbReference>
<dbReference type="FunCoup" id="Q8CIV8">
    <property type="interactions" value="2930"/>
</dbReference>
<dbReference type="STRING" id="10090.ENSMUSP00000047880"/>
<dbReference type="GlyGen" id="Q8CIV8">
    <property type="glycosylation" value="1 site, 1 O-linked glycan (1 site)"/>
</dbReference>
<dbReference type="PhosphoSitePlus" id="Q8CIV8"/>
<dbReference type="SwissPalm" id="Q8CIV8"/>
<dbReference type="PaxDb" id="10090-ENSMUSP00000047880"/>
<dbReference type="PeptideAtlas" id="Q8CIV8"/>
<dbReference type="ProteomicsDB" id="263136"/>
<dbReference type="Pumba" id="Q8CIV8"/>
<dbReference type="DNASU" id="70430"/>
<dbReference type="Ensembl" id="ENSMUST00000039894.13">
    <property type="protein sequence ID" value="ENSMUSP00000047880.7"/>
    <property type="gene ID" value="ENSMUSG00000039233.13"/>
</dbReference>
<dbReference type="GeneID" id="70430"/>
<dbReference type="KEGG" id="mmu:70430"/>
<dbReference type="UCSC" id="uc007pmq.2">
    <property type="organism name" value="mouse"/>
</dbReference>
<dbReference type="AGR" id="MGI:1917680"/>
<dbReference type="CTD" id="6905"/>
<dbReference type="MGI" id="MGI:1917680">
    <property type="gene designation" value="Tbce"/>
</dbReference>
<dbReference type="VEuPathDB" id="HostDB:ENSMUSG00000039233"/>
<dbReference type="eggNOG" id="KOG3207">
    <property type="taxonomic scope" value="Eukaryota"/>
</dbReference>
<dbReference type="GeneTree" id="ENSGT00530000063405"/>
<dbReference type="HOGENOM" id="CLU_017716_5_0_1"/>
<dbReference type="InParanoid" id="Q8CIV8"/>
<dbReference type="OMA" id="SEESHMF"/>
<dbReference type="OrthoDB" id="5273213at2759"/>
<dbReference type="PhylomeDB" id="Q8CIV8"/>
<dbReference type="TreeFam" id="TF313455"/>
<dbReference type="BioGRID-ORCS" id="70430">
    <property type="hits" value="21 hits in 61 CRISPR screens"/>
</dbReference>
<dbReference type="ChiTaRS" id="Tbce">
    <property type="organism name" value="mouse"/>
</dbReference>
<dbReference type="EvolutionaryTrace" id="Q8CIV8"/>
<dbReference type="PRO" id="PR:Q8CIV8"/>
<dbReference type="Proteomes" id="UP000000589">
    <property type="component" value="Chromosome 13"/>
</dbReference>
<dbReference type="RNAct" id="Q8CIV8">
    <property type="molecule type" value="protein"/>
</dbReference>
<dbReference type="Bgee" id="ENSMUSG00000039233">
    <property type="expression patterns" value="Expressed in retinal neural layer and 275 other cell types or tissues"/>
</dbReference>
<dbReference type="ExpressionAtlas" id="Q8CIV8">
    <property type="expression patterns" value="baseline and differential"/>
</dbReference>
<dbReference type="GO" id="GO:0005737">
    <property type="term" value="C:cytoplasm"/>
    <property type="evidence" value="ECO:0007669"/>
    <property type="project" value="UniProtKB-SubCell"/>
</dbReference>
<dbReference type="GO" id="GO:0005856">
    <property type="term" value="C:cytoskeleton"/>
    <property type="evidence" value="ECO:0007669"/>
    <property type="project" value="UniProtKB-SubCell"/>
</dbReference>
<dbReference type="GO" id="GO:0051082">
    <property type="term" value="F:unfolded protein binding"/>
    <property type="evidence" value="ECO:0000304"/>
    <property type="project" value="MGI"/>
</dbReference>
<dbReference type="GO" id="GO:0008344">
    <property type="term" value="P:adult locomotory behavior"/>
    <property type="evidence" value="ECO:0000315"/>
    <property type="project" value="MGI"/>
</dbReference>
<dbReference type="GO" id="GO:0007409">
    <property type="term" value="P:axonogenesis"/>
    <property type="evidence" value="ECO:0000315"/>
    <property type="project" value="MGI"/>
</dbReference>
<dbReference type="GO" id="GO:0048589">
    <property type="term" value="P:developmental growth"/>
    <property type="evidence" value="ECO:0000315"/>
    <property type="project" value="MGI"/>
</dbReference>
<dbReference type="GO" id="GO:0000226">
    <property type="term" value="P:microtubule cytoskeleton organization"/>
    <property type="evidence" value="ECO:0000315"/>
    <property type="project" value="MGI"/>
</dbReference>
<dbReference type="GO" id="GO:0007052">
    <property type="term" value="P:mitotic spindle organization"/>
    <property type="evidence" value="ECO:0000250"/>
    <property type="project" value="UniProtKB"/>
</dbReference>
<dbReference type="GO" id="GO:0014889">
    <property type="term" value="P:muscle atrophy"/>
    <property type="evidence" value="ECO:0000315"/>
    <property type="project" value="MGI"/>
</dbReference>
<dbReference type="GO" id="GO:0048936">
    <property type="term" value="P:peripheral nervous system neuron axonogenesis"/>
    <property type="evidence" value="ECO:0000315"/>
    <property type="project" value="MGI"/>
</dbReference>
<dbReference type="GO" id="GO:0007023">
    <property type="term" value="P:post-chaperonin tubulin folding pathway"/>
    <property type="evidence" value="ECO:0000250"/>
    <property type="project" value="UniProtKB"/>
</dbReference>
<dbReference type="GO" id="GO:0009791">
    <property type="term" value="P:post-embryonic development"/>
    <property type="evidence" value="ECO:0000315"/>
    <property type="project" value="MGI"/>
</dbReference>
<dbReference type="GO" id="GO:0006457">
    <property type="term" value="P:protein folding"/>
    <property type="evidence" value="ECO:0000304"/>
    <property type="project" value="MGI"/>
</dbReference>
<dbReference type="GO" id="GO:0007021">
    <property type="term" value="P:tubulin complex assembly"/>
    <property type="evidence" value="ECO:0000304"/>
    <property type="project" value="MGI"/>
</dbReference>
<dbReference type="CDD" id="cd17044">
    <property type="entry name" value="Ubl_TBCE"/>
    <property type="match status" value="1"/>
</dbReference>
<dbReference type="FunFam" id="2.30.30.190:FF:000008">
    <property type="entry name" value="Tubulin-specific chaperone E"/>
    <property type="match status" value="1"/>
</dbReference>
<dbReference type="FunFam" id="3.10.20.90:FF:000173">
    <property type="entry name" value="Tubulin-specific chaperone E"/>
    <property type="match status" value="1"/>
</dbReference>
<dbReference type="FunFam" id="3.80.10.10:FF:000268">
    <property type="entry name" value="Tubulin-specific chaperone E"/>
    <property type="match status" value="1"/>
</dbReference>
<dbReference type="FunFam" id="3.80.10.10:FF:000593">
    <property type="entry name" value="Tubulin-specific chaperone E"/>
    <property type="match status" value="1"/>
</dbReference>
<dbReference type="Gene3D" id="2.30.30.190">
    <property type="entry name" value="CAP Gly-rich-like domain"/>
    <property type="match status" value="1"/>
</dbReference>
<dbReference type="Gene3D" id="3.10.20.90">
    <property type="entry name" value="Phosphatidylinositol 3-kinase Catalytic Subunit, Chain A, domain 1"/>
    <property type="match status" value="1"/>
</dbReference>
<dbReference type="Gene3D" id="3.80.10.10">
    <property type="entry name" value="Ribonuclease Inhibitor"/>
    <property type="match status" value="2"/>
</dbReference>
<dbReference type="InterPro" id="IPR036859">
    <property type="entry name" value="CAP-Gly_dom_sf"/>
</dbReference>
<dbReference type="InterPro" id="IPR000938">
    <property type="entry name" value="CAP-Gly_domain"/>
</dbReference>
<dbReference type="InterPro" id="IPR032675">
    <property type="entry name" value="LRR_dom_sf"/>
</dbReference>
<dbReference type="InterPro" id="IPR000626">
    <property type="entry name" value="Ubiquitin-like_dom"/>
</dbReference>
<dbReference type="InterPro" id="IPR029071">
    <property type="entry name" value="Ubiquitin-like_domsf"/>
</dbReference>
<dbReference type="InterPro" id="IPR044079">
    <property type="entry name" value="Ubl_TBCE"/>
</dbReference>
<dbReference type="PANTHER" id="PTHR18849:SF0">
    <property type="entry name" value="CILIA- AND FLAGELLA-ASSOCIATED PROTEIN 410-RELATED"/>
    <property type="match status" value="1"/>
</dbReference>
<dbReference type="PANTHER" id="PTHR18849">
    <property type="entry name" value="LEUCINE RICH REPEAT PROTEIN"/>
    <property type="match status" value="1"/>
</dbReference>
<dbReference type="Pfam" id="PF01302">
    <property type="entry name" value="CAP_GLY"/>
    <property type="match status" value="1"/>
</dbReference>
<dbReference type="Pfam" id="PF14580">
    <property type="entry name" value="LRR_9"/>
    <property type="match status" value="1"/>
</dbReference>
<dbReference type="Pfam" id="PF14560">
    <property type="entry name" value="Ubiquitin_2"/>
    <property type="match status" value="1"/>
</dbReference>
<dbReference type="SMART" id="SM01052">
    <property type="entry name" value="CAP_GLY"/>
    <property type="match status" value="1"/>
</dbReference>
<dbReference type="SUPFAM" id="SSF74924">
    <property type="entry name" value="Cap-Gly domain"/>
    <property type="match status" value="1"/>
</dbReference>
<dbReference type="SUPFAM" id="SSF52058">
    <property type="entry name" value="L domain-like"/>
    <property type="match status" value="1"/>
</dbReference>
<dbReference type="SUPFAM" id="SSF54236">
    <property type="entry name" value="Ubiquitin-like"/>
    <property type="match status" value="1"/>
</dbReference>
<dbReference type="PROSITE" id="PS00845">
    <property type="entry name" value="CAP_GLY_1"/>
    <property type="match status" value="1"/>
</dbReference>
<dbReference type="PROSITE" id="PS50245">
    <property type="entry name" value="CAP_GLY_2"/>
    <property type="match status" value="1"/>
</dbReference>
<feature type="initiator methionine" description="Removed" evidence="2">
    <location>
        <position position="1"/>
    </location>
</feature>
<feature type="chain" id="PRO_0000083539" description="Tubulin-specific chaperone E">
    <location>
        <begin position="2"/>
        <end position="524"/>
    </location>
</feature>
<feature type="domain" description="CAP-Gly" evidence="3">
    <location>
        <begin position="27"/>
        <end position="71"/>
    </location>
</feature>
<feature type="repeat" description="LRR 1">
    <location>
        <begin position="154"/>
        <end position="175"/>
    </location>
</feature>
<feature type="repeat" description="LRR 2">
    <location>
        <begin position="180"/>
        <end position="201"/>
    </location>
</feature>
<feature type="repeat" description="LRR 3">
    <location>
        <begin position="206"/>
        <end position="227"/>
    </location>
</feature>
<feature type="repeat" description="LRR 4">
    <location>
        <begin position="231"/>
        <end position="253"/>
    </location>
</feature>
<feature type="repeat" description="LRR 5">
    <location>
        <begin position="254"/>
        <end position="275"/>
    </location>
</feature>
<feature type="repeat" description="LRR 6">
    <location>
        <begin position="279"/>
        <end position="300"/>
    </location>
</feature>
<feature type="repeat" description="LRR 7">
    <location>
        <begin position="309"/>
        <end position="330"/>
    </location>
</feature>
<feature type="domain" description="LRRCT">
    <location>
        <begin position="343"/>
        <end position="381"/>
    </location>
</feature>
<feature type="modified residue" description="N-acetylserine" evidence="2">
    <location>
        <position position="2"/>
    </location>
</feature>
<feature type="modified residue" description="N6-acetyllysine" evidence="2">
    <location>
        <position position="460"/>
    </location>
</feature>
<feature type="modified residue" description="Phosphoserine" evidence="2">
    <location>
        <position position="492"/>
    </location>
</feature>
<feature type="sequence variant" evidence="4">
    <original>A</original>
    <variation>V</variation>
    <location>
        <position position="348"/>
    </location>
</feature>
<feature type="sequence variant" evidence="4">
    <original>W</original>
    <variation>G</variation>
    <location>
        <position position="524"/>
    </location>
</feature>
<feature type="strand" evidence="7">
    <location>
        <begin position="442"/>
        <end position="451"/>
    </location>
</feature>
<feature type="strand" evidence="7">
    <location>
        <begin position="453"/>
        <end position="455"/>
    </location>
</feature>
<feature type="strand" evidence="7">
    <location>
        <begin position="458"/>
        <end position="463"/>
    </location>
</feature>
<feature type="helix" evidence="7">
    <location>
        <begin position="468"/>
        <end position="476"/>
    </location>
</feature>
<feature type="turn" evidence="7">
    <location>
        <begin position="477"/>
        <end position="480"/>
    </location>
</feature>
<feature type="turn" evidence="7">
    <location>
        <begin position="483"/>
        <end position="485"/>
    </location>
</feature>
<feature type="strand" evidence="7">
    <location>
        <begin position="487"/>
        <end position="491"/>
    </location>
</feature>
<feature type="strand" evidence="7">
    <location>
        <begin position="499"/>
        <end position="501"/>
    </location>
</feature>
<feature type="strand" evidence="7">
    <location>
        <begin position="505"/>
        <end position="509"/>
    </location>
</feature>
<feature type="helix" evidence="7">
    <location>
        <begin position="510"/>
        <end position="512"/>
    </location>
</feature>
<feature type="strand" evidence="7">
    <location>
        <begin position="519"/>
        <end position="523"/>
    </location>
</feature>
<accession>Q8CIV8</accession>
<sequence>MSDILPLDVIGRRVEVNGEYATVRFCGAVPPVAGLWLGVEWDNPERGKHDGSHEGTMYFKCRHPTGGSFVRPSKVNFGDDFLTALKKRYVLEDGPDDDENSCSLKVGSKQVQTIGFEHITKKQSQLRALQDISLWNCAVSHAGEQGRIAEACPNIRVVNLSKNLLSTWDEVVLIAEQLKDLEALDLSENKLQFPSDSPTLTRTFSTLKTLVLNKTGITWTEVLHCAPSWPVLEELYLKSNNISISERPVNVLQKMRLLDLSSNPSIDESQLSLIADLPRLEHLVLSDIGLSSIHFPDAEIGCKTSMFPALKYLIVNDNQISEWSFINELDKLQSLQALSCTRNPLSKADKAEEIIIAKIAQLRTLNRCQILPEERRGAELDYRKAFGNEWRKAGGHPDPDKNRPNAAFLSAHPRYQLLCCKYGAPEDEELKTQQPFMLKKQLLTLKIKCSNQPERQILEKQLPDSMTVQKVKGLLSRLLKVPVSELLLSYESSKMPGREIELENDLQPLQFYSVENGDCLLVRW</sequence>